<dbReference type="EC" id="2.7.1.23" evidence="1"/>
<dbReference type="EMBL" id="AE009949">
    <property type="protein sequence ID" value="AAL97710.1"/>
    <property type="molecule type" value="Genomic_DNA"/>
</dbReference>
<dbReference type="RefSeq" id="WP_002993124.1">
    <property type="nucleotide sequence ID" value="NC_003485.1"/>
</dbReference>
<dbReference type="SMR" id="P65783"/>
<dbReference type="KEGG" id="spm:spyM18_1087"/>
<dbReference type="HOGENOM" id="CLU_008831_0_3_9"/>
<dbReference type="GO" id="GO:0005737">
    <property type="term" value="C:cytoplasm"/>
    <property type="evidence" value="ECO:0007669"/>
    <property type="project" value="UniProtKB-SubCell"/>
</dbReference>
<dbReference type="GO" id="GO:0005524">
    <property type="term" value="F:ATP binding"/>
    <property type="evidence" value="ECO:0007669"/>
    <property type="project" value="UniProtKB-KW"/>
</dbReference>
<dbReference type="GO" id="GO:0046872">
    <property type="term" value="F:metal ion binding"/>
    <property type="evidence" value="ECO:0007669"/>
    <property type="project" value="UniProtKB-UniRule"/>
</dbReference>
<dbReference type="GO" id="GO:0051287">
    <property type="term" value="F:NAD binding"/>
    <property type="evidence" value="ECO:0007669"/>
    <property type="project" value="UniProtKB-ARBA"/>
</dbReference>
<dbReference type="GO" id="GO:0003951">
    <property type="term" value="F:NAD+ kinase activity"/>
    <property type="evidence" value="ECO:0007669"/>
    <property type="project" value="UniProtKB-UniRule"/>
</dbReference>
<dbReference type="GO" id="GO:0019674">
    <property type="term" value="P:NAD metabolic process"/>
    <property type="evidence" value="ECO:0007669"/>
    <property type="project" value="InterPro"/>
</dbReference>
<dbReference type="GO" id="GO:0006741">
    <property type="term" value="P:NADP biosynthetic process"/>
    <property type="evidence" value="ECO:0007669"/>
    <property type="project" value="UniProtKB-UniRule"/>
</dbReference>
<dbReference type="Gene3D" id="3.40.50.10330">
    <property type="entry name" value="Probable inorganic polyphosphate/atp-NAD kinase, domain 1"/>
    <property type="match status" value="1"/>
</dbReference>
<dbReference type="Gene3D" id="2.60.200.30">
    <property type="entry name" value="Probable inorganic polyphosphate/atp-NAD kinase, domain 2"/>
    <property type="match status" value="1"/>
</dbReference>
<dbReference type="HAMAP" id="MF_00361">
    <property type="entry name" value="NAD_kinase"/>
    <property type="match status" value="1"/>
</dbReference>
<dbReference type="InterPro" id="IPR017438">
    <property type="entry name" value="ATP-NAD_kinase_N"/>
</dbReference>
<dbReference type="InterPro" id="IPR017437">
    <property type="entry name" value="ATP-NAD_kinase_PpnK-typ_C"/>
</dbReference>
<dbReference type="InterPro" id="IPR016064">
    <property type="entry name" value="NAD/diacylglycerol_kinase_sf"/>
</dbReference>
<dbReference type="InterPro" id="IPR002504">
    <property type="entry name" value="NADK"/>
</dbReference>
<dbReference type="NCBIfam" id="NF003424">
    <property type="entry name" value="PRK04885.1"/>
    <property type="match status" value="1"/>
</dbReference>
<dbReference type="PANTHER" id="PTHR20275">
    <property type="entry name" value="NAD KINASE"/>
    <property type="match status" value="1"/>
</dbReference>
<dbReference type="PANTHER" id="PTHR20275:SF0">
    <property type="entry name" value="NAD KINASE"/>
    <property type="match status" value="1"/>
</dbReference>
<dbReference type="Pfam" id="PF01513">
    <property type="entry name" value="NAD_kinase"/>
    <property type="match status" value="1"/>
</dbReference>
<dbReference type="Pfam" id="PF20143">
    <property type="entry name" value="NAD_kinase_C"/>
    <property type="match status" value="1"/>
</dbReference>
<dbReference type="SUPFAM" id="SSF111331">
    <property type="entry name" value="NAD kinase/diacylglycerol kinase-like"/>
    <property type="match status" value="1"/>
</dbReference>
<reference key="1">
    <citation type="journal article" date="2002" name="Proc. Natl. Acad. Sci. U.S.A.">
        <title>Genome sequence and comparative microarray analysis of serotype M18 group A Streptococcus strains associated with acute rheumatic fever outbreaks.</title>
        <authorList>
            <person name="Smoot J.C."/>
            <person name="Barbian K.D."/>
            <person name="Van Gompel J.J."/>
            <person name="Smoot L.M."/>
            <person name="Chaussee M.S."/>
            <person name="Sylva G.L."/>
            <person name="Sturdevant D.E."/>
            <person name="Ricklefs S.M."/>
            <person name="Porcella S.F."/>
            <person name="Parkins L.D."/>
            <person name="Beres S.B."/>
            <person name="Campbell D.S."/>
            <person name="Smith T.M."/>
            <person name="Zhang Q."/>
            <person name="Kapur V."/>
            <person name="Daly J.A."/>
            <person name="Veasy L.G."/>
            <person name="Musser J.M."/>
        </authorList>
    </citation>
    <scope>NUCLEOTIDE SEQUENCE [LARGE SCALE GENOMIC DNA]</scope>
    <source>
        <strain>MGAS8232</strain>
    </source>
</reference>
<accession>P65783</accession>
<accession>Q99ZQ7</accession>
<protein>
    <recommendedName>
        <fullName evidence="1">NAD kinase</fullName>
        <ecNumber evidence="1">2.7.1.23</ecNumber>
    </recommendedName>
    <alternativeName>
        <fullName evidence="1">ATP-dependent NAD kinase</fullName>
    </alternativeName>
</protein>
<keyword id="KW-0067">ATP-binding</keyword>
<keyword id="KW-0963">Cytoplasm</keyword>
<keyword id="KW-0418">Kinase</keyword>
<keyword id="KW-0520">NAD</keyword>
<keyword id="KW-0521">NADP</keyword>
<keyword id="KW-0547">Nucleotide-binding</keyword>
<keyword id="KW-0808">Transferase</keyword>
<comment type="function">
    <text evidence="1">Involved in the regulation of the intracellular balance of NAD and NADP, and is a key enzyme in the biosynthesis of NADP. Catalyzes specifically the phosphorylation on 2'-hydroxyl of the adenosine moiety of NAD to yield NADP.</text>
</comment>
<comment type="catalytic activity">
    <reaction evidence="1">
        <text>NAD(+) + ATP = ADP + NADP(+) + H(+)</text>
        <dbReference type="Rhea" id="RHEA:18629"/>
        <dbReference type="ChEBI" id="CHEBI:15378"/>
        <dbReference type="ChEBI" id="CHEBI:30616"/>
        <dbReference type="ChEBI" id="CHEBI:57540"/>
        <dbReference type="ChEBI" id="CHEBI:58349"/>
        <dbReference type="ChEBI" id="CHEBI:456216"/>
        <dbReference type="EC" id="2.7.1.23"/>
    </reaction>
</comment>
<comment type="cofactor">
    <cofactor evidence="1">
        <name>a divalent metal cation</name>
        <dbReference type="ChEBI" id="CHEBI:60240"/>
    </cofactor>
</comment>
<comment type="subcellular location">
    <subcellularLocation>
        <location evidence="1">Cytoplasm</location>
    </subcellularLocation>
</comment>
<comment type="similarity">
    <text evidence="1">Belongs to the NAD kinase family.</text>
</comment>
<sequence length="278" mass="31376">MTQMNYTGKVKRVAIIANGKYQSKRVASKLFSVFKDDPDFYLSKKNPDIVISIGGDGMLLSAFHMYEKELDKVRFVGIHTGHLGFYTDYRDFEVDKLIDNLRKDKGEQISYPILKVAITLDDGRVVKARALNEATVKRIEKTMVADVIINHVKFESFRGDGISVSTPTGSTAYNKSLGGAVLHPTIEALQLTEISSLNNRVFRTLGSSIIIPKKDKIELVPKRLGIYTISIDNKTYQLKNVTKVEYFIDDEKIHFVSSPSHTSFWERVKDAFIGEIDS</sequence>
<proteinExistence type="inferred from homology"/>
<organism>
    <name type="scientific">Streptococcus pyogenes serotype M18 (strain MGAS8232)</name>
    <dbReference type="NCBI Taxonomy" id="186103"/>
    <lineage>
        <taxon>Bacteria</taxon>
        <taxon>Bacillati</taxon>
        <taxon>Bacillota</taxon>
        <taxon>Bacilli</taxon>
        <taxon>Lactobacillales</taxon>
        <taxon>Streptococcaceae</taxon>
        <taxon>Streptococcus</taxon>
    </lineage>
</organism>
<feature type="chain" id="PRO_0000120675" description="NAD kinase">
    <location>
        <begin position="1"/>
        <end position="278"/>
    </location>
</feature>
<feature type="active site" description="Proton acceptor" evidence="1">
    <location>
        <position position="56"/>
    </location>
</feature>
<feature type="binding site" evidence="1">
    <location>
        <begin position="56"/>
        <end position="57"/>
    </location>
    <ligand>
        <name>NAD(+)</name>
        <dbReference type="ChEBI" id="CHEBI:57540"/>
    </ligand>
</feature>
<feature type="binding site" evidence="1">
    <location>
        <begin position="132"/>
        <end position="133"/>
    </location>
    <ligand>
        <name>NAD(+)</name>
        <dbReference type="ChEBI" id="CHEBI:57540"/>
    </ligand>
</feature>
<feature type="binding site" evidence="1">
    <location>
        <position position="158"/>
    </location>
    <ligand>
        <name>NAD(+)</name>
        <dbReference type="ChEBI" id="CHEBI:57540"/>
    </ligand>
</feature>
<feature type="binding site" evidence="1">
    <location>
        <position position="160"/>
    </location>
    <ligand>
        <name>NAD(+)</name>
        <dbReference type="ChEBI" id="CHEBI:57540"/>
    </ligand>
</feature>
<feature type="binding site" evidence="1">
    <location>
        <begin position="171"/>
        <end position="176"/>
    </location>
    <ligand>
        <name>NAD(+)</name>
        <dbReference type="ChEBI" id="CHEBI:57540"/>
    </ligand>
</feature>
<gene>
    <name evidence="1" type="primary">nadK</name>
    <name type="ordered locus">spyM18_1087</name>
</gene>
<name>NADK_STRP8</name>
<evidence type="ECO:0000255" key="1">
    <source>
        <dbReference type="HAMAP-Rule" id="MF_00361"/>
    </source>
</evidence>